<name>HSCB_VIBVY</name>
<reference key="1">
    <citation type="journal article" date="2003" name="Genome Res.">
        <title>Comparative genome analysis of Vibrio vulnificus, a marine pathogen.</title>
        <authorList>
            <person name="Chen C.-Y."/>
            <person name="Wu K.-M."/>
            <person name="Chang Y.-C."/>
            <person name="Chang C.-H."/>
            <person name="Tsai H.-C."/>
            <person name="Liao T.-L."/>
            <person name="Liu Y.-M."/>
            <person name="Chen H.-J."/>
            <person name="Shen A.B.-T."/>
            <person name="Li J.-C."/>
            <person name="Su T.-L."/>
            <person name="Shao C.-P."/>
            <person name="Lee C.-T."/>
            <person name="Hor L.-I."/>
            <person name="Tsai S.-F."/>
        </authorList>
    </citation>
    <scope>NUCLEOTIDE SEQUENCE [LARGE SCALE GENOMIC DNA]</scope>
    <source>
        <strain>YJ016</strain>
    </source>
</reference>
<keyword id="KW-0143">Chaperone</keyword>
<organism>
    <name type="scientific">Vibrio vulnificus (strain YJ016)</name>
    <dbReference type="NCBI Taxonomy" id="196600"/>
    <lineage>
        <taxon>Bacteria</taxon>
        <taxon>Pseudomonadati</taxon>
        <taxon>Pseudomonadota</taxon>
        <taxon>Gammaproteobacteria</taxon>
        <taxon>Vibrionales</taxon>
        <taxon>Vibrionaceae</taxon>
        <taxon>Vibrio</taxon>
    </lineage>
</organism>
<protein>
    <recommendedName>
        <fullName evidence="1">Co-chaperone protein HscB homolog</fullName>
    </recommendedName>
</protein>
<proteinExistence type="inferred from homology"/>
<sequence>MNHFELFGLPPQFSLDGSLLSSQFRELQKRFHPDNFATASERDRLLAVQKAAQINDAYQVLKNPISRAEYLLSQNGLEIRGEQQTMQDPMFLMEQMELREELEEIPHGSDAESALAAFDARVSKMYKQHLASIEQELNDAQWPQAADRVRKLKFIAKLKNEIELVEEKLFG</sequence>
<dbReference type="EMBL" id="BA000037">
    <property type="protein sequence ID" value="BAC93522.1"/>
    <property type="molecule type" value="Genomic_DNA"/>
</dbReference>
<dbReference type="RefSeq" id="WP_011149602.1">
    <property type="nucleotide sequence ID" value="NC_005139.1"/>
</dbReference>
<dbReference type="SMR" id="Q7MNF9"/>
<dbReference type="STRING" id="672.VV93_v1c07040"/>
<dbReference type="KEGG" id="vvy:VV0758"/>
<dbReference type="PATRIC" id="fig|196600.6.peg.773"/>
<dbReference type="eggNOG" id="COG1076">
    <property type="taxonomic scope" value="Bacteria"/>
</dbReference>
<dbReference type="HOGENOM" id="CLU_068529_2_0_6"/>
<dbReference type="Proteomes" id="UP000002675">
    <property type="component" value="Chromosome I"/>
</dbReference>
<dbReference type="GO" id="GO:1990230">
    <property type="term" value="C:iron-sulfur cluster transfer complex"/>
    <property type="evidence" value="ECO:0007669"/>
    <property type="project" value="TreeGrafter"/>
</dbReference>
<dbReference type="GO" id="GO:0001671">
    <property type="term" value="F:ATPase activator activity"/>
    <property type="evidence" value="ECO:0007669"/>
    <property type="project" value="InterPro"/>
</dbReference>
<dbReference type="GO" id="GO:0051087">
    <property type="term" value="F:protein-folding chaperone binding"/>
    <property type="evidence" value="ECO:0007669"/>
    <property type="project" value="InterPro"/>
</dbReference>
<dbReference type="GO" id="GO:0044571">
    <property type="term" value="P:[2Fe-2S] cluster assembly"/>
    <property type="evidence" value="ECO:0007669"/>
    <property type="project" value="InterPro"/>
</dbReference>
<dbReference type="GO" id="GO:0051259">
    <property type="term" value="P:protein complex oligomerization"/>
    <property type="evidence" value="ECO:0007669"/>
    <property type="project" value="InterPro"/>
</dbReference>
<dbReference type="GO" id="GO:0006457">
    <property type="term" value="P:protein folding"/>
    <property type="evidence" value="ECO:0007669"/>
    <property type="project" value="UniProtKB-UniRule"/>
</dbReference>
<dbReference type="CDD" id="cd06257">
    <property type="entry name" value="DnaJ"/>
    <property type="match status" value="1"/>
</dbReference>
<dbReference type="Gene3D" id="1.10.287.110">
    <property type="entry name" value="DnaJ domain"/>
    <property type="match status" value="1"/>
</dbReference>
<dbReference type="Gene3D" id="1.20.1280.20">
    <property type="entry name" value="HscB, C-terminal domain"/>
    <property type="match status" value="1"/>
</dbReference>
<dbReference type="HAMAP" id="MF_00682">
    <property type="entry name" value="HscB"/>
    <property type="match status" value="1"/>
</dbReference>
<dbReference type="InterPro" id="IPR001623">
    <property type="entry name" value="DnaJ_domain"/>
</dbReference>
<dbReference type="InterPro" id="IPR004640">
    <property type="entry name" value="HscB"/>
</dbReference>
<dbReference type="InterPro" id="IPR036386">
    <property type="entry name" value="HscB_C_sf"/>
</dbReference>
<dbReference type="InterPro" id="IPR009073">
    <property type="entry name" value="HscB_oligo_C"/>
</dbReference>
<dbReference type="InterPro" id="IPR036869">
    <property type="entry name" value="J_dom_sf"/>
</dbReference>
<dbReference type="NCBIfam" id="TIGR00714">
    <property type="entry name" value="hscB"/>
    <property type="match status" value="1"/>
</dbReference>
<dbReference type="NCBIfam" id="NF003449">
    <property type="entry name" value="PRK05014.1"/>
    <property type="match status" value="1"/>
</dbReference>
<dbReference type="PANTHER" id="PTHR14021">
    <property type="entry name" value="IRON-SULFUR CLUSTER CO-CHAPERONE PROTEIN HSCB"/>
    <property type="match status" value="1"/>
</dbReference>
<dbReference type="PANTHER" id="PTHR14021:SF15">
    <property type="entry name" value="IRON-SULFUR CLUSTER CO-CHAPERONE PROTEIN HSCB"/>
    <property type="match status" value="1"/>
</dbReference>
<dbReference type="Pfam" id="PF00226">
    <property type="entry name" value="DnaJ"/>
    <property type="match status" value="1"/>
</dbReference>
<dbReference type="Pfam" id="PF07743">
    <property type="entry name" value="HSCB_C"/>
    <property type="match status" value="1"/>
</dbReference>
<dbReference type="SMART" id="SM00271">
    <property type="entry name" value="DnaJ"/>
    <property type="match status" value="1"/>
</dbReference>
<dbReference type="SUPFAM" id="SSF46565">
    <property type="entry name" value="Chaperone J-domain"/>
    <property type="match status" value="1"/>
</dbReference>
<dbReference type="SUPFAM" id="SSF47144">
    <property type="entry name" value="HSC20 (HSCB), C-terminal oligomerisation domain"/>
    <property type="match status" value="1"/>
</dbReference>
<dbReference type="PROSITE" id="PS50076">
    <property type="entry name" value="DNAJ_2"/>
    <property type="match status" value="1"/>
</dbReference>
<evidence type="ECO:0000255" key="1">
    <source>
        <dbReference type="HAMAP-Rule" id="MF_00682"/>
    </source>
</evidence>
<accession>Q7MNF9</accession>
<feature type="chain" id="PRO_0000070996" description="Co-chaperone protein HscB homolog">
    <location>
        <begin position="1"/>
        <end position="171"/>
    </location>
</feature>
<feature type="domain" description="J" evidence="1">
    <location>
        <begin position="2"/>
        <end position="74"/>
    </location>
</feature>
<gene>
    <name evidence="1" type="primary">hscB</name>
    <name type="ordered locus">VV0758</name>
</gene>
<comment type="function">
    <text evidence="1">Co-chaperone involved in the maturation of iron-sulfur cluster-containing proteins. Seems to help targeting proteins to be folded toward HscA.</text>
</comment>
<comment type="subunit">
    <text evidence="1">Interacts with HscA and stimulates its ATPase activity.</text>
</comment>
<comment type="similarity">
    <text evidence="1">Belongs to the HscB family.</text>
</comment>